<protein>
    <recommendedName>
        <fullName evidence="2">Small ribosomal subunit protein uS19</fullName>
    </recommendedName>
    <alternativeName>
        <fullName>30S ribosomal protein S19</fullName>
    </alternativeName>
</protein>
<comment type="function">
    <text evidence="1">Protein S19 forms a complex with S13 that binds strongly to the 16S ribosomal RNA.</text>
</comment>
<comment type="similarity">
    <text evidence="2">Belongs to the universal ribosomal protein uS19 family.</text>
</comment>
<proteinExistence type="evidence at protein level"/>
<accession>P9WH45</accession>
<accession>L0T687</accession>
<accession>O08118</accession>
<accession>P0A5X4</accession>
<accession>P48947</accession>
<accession>P95053</accession>
<gene>
    <name type="primary">rpsS</name>
    <name type="ordered locus">Rv0705</name>
    <name type="ORF">MTCY210.24</name>
</gene>
<dbReference type="EMBL" id="AL123456">
    <property type="protein sequence ID" value="CCP43449.1"/>
    <property type="molecule type" value="Genomic_DNA"/>
</dbReference>
<dbReference type="PIR" id="D70642">
    <property type="entry name" value="D70642"/>
</dbReference>
<dbReference type="RefSeq" id="NP_215219.1">
    <property type="nucleotide sequence ID" value="NC_000962.3"/>
</dbReference>
<dbReference type="RefSeq" id="WP_003403584.1">
    <property type="nucleotide sequence ID" value="NZ_NVQJ01000007.1"/>
</dbReference>
<dbReference type="PDB" id="5V93">
    <property type="method" value="EM"/>
    <property type="resolution" value="4.00 A"/>
    <property type="chains" value="s=1-93"/>
</dbReference>
<dbReference type="PDB" id="7KGB">
    <property type="method" value="EM"/>
    <property type="resolution" value="2.70 A"/>
    <property type="chains" value="s=1-93"/>
</dbReference>
<dbReference type="PDB" id="7MSC">
    <property type="method" value="EM"/>
    <property type="resolution" value="2.97 A"/>
    <property type="chains" value="s=1-93"/>
</dbReference>
<dbReference type="PDB" id="7MSH">
    <property type="method" value="EM"/>
    <property type="resolution" value="3.23 A"/>
    <property type="chains" value="s=1-93"/>
</dbReference>
<dbReference type="PDB" id="7MSM">
    <property type="method" value="EM"/>
    <property type="resolution" value="2.79 A"/>
    <property type="chains" value="s=1-93"/>
</dbReference>
<dbReference type="PDB" id="7MSZ">
    <property type="method" value="EM"/>
    <property type="resolution" value="3.10 A"/>
    <property type="chains" value="s=1-93"/>
</dbReference>
<dbReference type="PDB" id="7MT2">
    <property type="method" value="EM"/>
    <property type="resolution" value="2.76 A"/>
    <property type="chains" value="s=1-93"/>
</dbReference>
<dbReference type="PDB" id="7MT3">
    <property type="method" value="EM"/>
    <property type="resolution" value="2.80 A"/>
    <property type="chains" value="s=1-93"/>
</dbReference>
<dbReference type="PDB" id="7MT7">
    <property type="method" value="EM"/>
    <property type="resolution" value="2.71 A"/>
    <property type="chains" value="s=1-93"/>
</dbReference>
<dbReference type="PDB" id="7SFR">
    <property type="method" value="EM"/>
    <property type="resolution" value="2.60 A"/>
    <property type="chains" value="s=1-93"/>
</dbReference>
<dbReference type="PDBsum" id="5V93"/>
<dbReference type="PDBsum" id="7KGB"/>
<dbReference type="PDBsum" id="7MSC"/>
<dbReference type="PDBsum" id="7MSH"/>
<dbReference type="PDBsum" id="7MSM"/>
<dbReference type="PDBsum" id="7MSZ"/>
<dbReference type="PDBsum" id="7MT2"/>
<dbReference type="PDBsum" id="7MT3"/>
<dbReference type="PDBsum" id="7MT7"/>
<dbReference type="PDBsum" id="7SFR"/>
<dbReference type="EMDB" id="EMD-22865"/>
<dbReference type="EMDB" id="EMD-23961"/>
<dbReference type="EMDB" id="EMD-23962"/>
<dbReference type="EMDB" id="EMD-23969"/>
<dbReference type="EMDB" id="EMD-23972"/>
<dbReference type="EMDB" id="EMD-23974"/>
<dbReference type="EMDB" id="EMD-23975"/>
<dbReference type="EMDB" id="EMD-23976"/>
<dbReference type="EMDB" id="EMD-8645"/>
<dbReference type="SMR" id="P9WH45"/>
<dbReference type="FunCoup" id="P9WH45">
    <property type="interactions" value="158"/>
</dbReference>
<dbReference type="STRING" id="83332.Rv0705"/>
<dbReference type="PaxDb" id="83332-Rv0705"/>
<dbReference type="DNASU" id="888356"/>
<dbReference type="GeneID" id="45424670"/>
<dbReference type="GeneID" id="888356"/>
<dbReference type="KEGG" id="mtu:Rv0705"/>
<dbReference type="KEGG" id="mtv:RVBD_0705"/>
<dbReference type="TubercuList" id="Rv0705"/>
<dbReference type="eggNOG" id="COG0185">
    <property type="taxonomic scope" value="Bacteria"/>
</dbReference>
<dbReference type="InParanoid" id="P9WH45"/>
<dbReference type="OrthoDB" id="9797833at2"/>
<dbReference type="PhylomeDB" id="P9WH45"/>
<dbReference type="PRO" id="PR:P9WH45"/>
<dbReference type="Proteomes" id="UP000001584">
    <property type="component" value="Chromosome"/>
</dbReference>
<dbReference type="GO" id="GO:0005737">
    <property type="term" value="C:cytoplasm"/>
    <property type="evidence" value="ECO:0007669"/>
    <property type="project" value="UniProtKB-ARBA"/>
</dbReference>
<dbReference type="GO" id="GO:0005886">
    <property type="term" value="C:plasma membrane"/>
    <property type="evidence" value="ECO:0007005"/>
    <property type="project" value="MTBBASE"/>
</dbReference>
<dbReference type="GO" id="GO:0015935">
    <property type="term" value="C:small ribosomal subunit"/>
    <property type="evidence" value="ECO:0007669"/>
    <property type="project" value="InterPro"/>
</dbReference>
<dbReference type="GO" id="GO:0019843">
    <property type="term" value="F:rRNA binding"/>
    <property type="evidence" value="ECO:0007669"/>
    <property type="project" value="UniProtKB-UniRule"/>
</dbReference>
<dbReference type="GO" id="GO:0003735">
    <property type="term" value="F:structural constituent of ribosome"/>
    <property type="evidence" value="ECO:0000318"/>
    <property type="project" value="GO_Central"/>
</dbReference>
<dbReference type="GO" id="GO:0000028">
    <property type="term" value="P:ribosomal small subunit assembly"/>
    <property type="evidence" value="ECO:0000318"/>
    <property type="project" value="GO_Central"/>
</dbReference>
<dbReference type="GO" id="GO:0006412">
    <property type="term" value="P:translation"/>
    <property type="evidence" value="ECO:0007669"/>
    <property type="project" value="UniProtKB-UniRule"/>
</dbReference>
<dbReference type="FunFam" id="3.30.860.10:FF:000001">
    <property type="entry name" value="30S ribosomal protein S19"/>
    <property type="match status" value="1"/>
</dbReference>
<dbReference type="Gene3D" id="3.30.860.10">
    <property type="entry name" value="30s Ribosomal Protein S19, Chain A"/>
    <property type="match status" value="1"/>
</dbReference>
<dbReference type="HAMAP" id="MF_00531">
    <property type="entry name" value="Ribosomal_uS19"/>
    <property type="match status" value="1"/>
</dbReference>
<dbReference type="InterPro" id="IPR002222">
    <property type="entry name" value="Ribosomal_uS19"/>
</dbReference>
<dbReference type="InterPro" id="IPR005732">
    <property type="entry name" value="Ribosomal_uS19_bac-type"/>
</dbReference>
<dbReference type="InterPro" id="IPR020934">
    <property type="entry name" value="Ribosomal_uS19_CS"/>
</dbReference>
<dbReference type="InterPro" id="IPR023575">
    <property type="entry name" value="Ribosomal_uS19_SF"/>
</dbReference>
<dbReference type="NCBIfam" id="TIGR01050">
    <property type="entry name" value="rpsS_bact"/>
    <property type="match status" value="1"/>
</dbReference>
<dbReference type="PANTHER" id="PTHR11880">
    <property type="entry name" value="RIBOSOMAL PROTEIN S19P FAMILY MEMBER"/>
    <property type="match status" value="1"/>
</dbReference>
<dbReference type="PANTHER" id="PTHR11880:SF8">
    <property type="entry name" value="SMALL RIBOSOMAL SUBUNIT PROTEIN US19M"/>
    <property type="match status" value="1"/>
</dbReference>
<dbReference type="Pfam" id="PF00203">
    <property type="entry name" value="Ribosomal_S19"/>
    <property type="match status" value="1"/>
</dbReference>
<dbReference type="PIRSF" id="PIRSF002144">
    <property type="entry name" value="Ribosomal_S19"/>
    <property type="match status" value="1"/>
</dbReference>
<dbReference type="PRINTS" id="PR00975">
    <property type="entry name" value="RIBOSOMALS19"/>
</dbReference>
<dbReference type="SUPFAM" id="SSF54570">
    <property type="entry name" value="Ribosomal protein S19"/>
    <property type="match status" value="1"/>
</dbReference>
<dbReference type="PROSITE" id="PS00323">
    <property type="entry name" value="RIBOSOMAL_S19"/>
    <property type="match status" value="1"/>
</dbReference>
<keyword id="KW-0002">3D-structure</keyword>
<keyword id="KW-1185">Reference proteome</keyword>
<keyword id="KW-0687">Ribonucleoprotein</keyword>
<keyword id="KW-0689">Ribosomal protein</keyword>
<keyword id="KW-0694">RNA-binding</keyword>
<keyword id="KW-0699">rRNA-binding</keyword>
<sequence length="93" mass="10804">MPRSLKKGPFVDEHLLKKVDVQNEKNTKQVIKTWSRRSTIIPDFIGHTFAVHDGRKHVPVFVTESMVGHKLGEFAPTRTFKGHIKDDRKSKRR</sequence>
<reference key="1">
    <citation type="journal article" date="1998" name="Nature">
        <title>Deciphering the biology of Mycobacterium tuberculosis from the complete genome sequence.</title>
        <authorList>
            <person name="Cole S.T."/>
            <person name="Brosch R."/>
            <person name="Parkhill J."/>
            <person name="Garnier T."/>
            <person name="Churcher C.M."/>
            <person name="Harris D.E."/>
            <person name="Gordon S.V."/>
            <person name="Eiglmeier K."/>
            <person name="Gas S."/>
            <person name="Barry C.E. III"/>
            <person name="Tekaia F."/>
            <person name="Badcock K."/>
            <person name="Basham D."/>
            <person name="Brown D."/>
            <person name="Chillingworth T."/>
            <person name="Connor R."/>
            <person name="Davies R.M."/>
            <person name="Devlin K."/>
            <person name="Feltwell T."/>
            <person name="Gentles S."/>
            <person name="Hamlin N."/>
            <person name="Holroyd S."/>
            <person name="Hornsby T."/>
            <person name="Jagels K."/>
            <person name="Krogh A."/>
            <person name="McLean J."/>
            <person name="Moule S."/>
            <person name="Murphy L.D."/>
            <person name="Oliver S."/>
            <person name="Osborne J."/>
            <person name="Quail M.A."/>
            <person name="Rajandream M.A."/>
            <person name="Rogers J."/>
            <person name="Rutter S."/>
            <person name="Seeger K."/>
            <person name="Skelton S."/>
            <person name="Squares S."/>
            <person name="Squares R."/>
            <person name="Sulston J.E."/>
            <person name="Taylor K."/>
            <person name="Whitehead S."/>
            <person name="Barrell B.G."/>
        </authorList>
    </citation>
    <scope>NUCLEOTIDE SEQUENCE [LARGE SCALE GENOMIC DNA]</scope>
    <source>
        <strain>ATCC 25618 / H37Rv</strain>
    </source>
</reference>
<reference key="2">
    <citation type="journal article" date="2011" name="Mol. Cell. Proteomics">
        <title>Proteogenomic analysis of Mycobacterium tuberculosis by high resolution mass spectrometry.</title>
        <authorList>
            <person name="Kelkar D.S."/>
            <person name="Kumar D."/>
            <person name="Kumar P."/>
            <person name="Balakrishnan L."/>
            <person name="Muthusamy B."/>
            <person name="Yadav A.K."/>
            <person name="Shrivastava P."/>
            <person name="Marimuthu A."/>
            <person name="Anand S."/>
            <person name="Sundaram H."/>
            <person name="Kingsbury R."/>
            <person name="Harsha H.C."/>
            <person name="Nair B."/>
            <person name="Prasad T.S."/>
            <person name="Chauhan D.S."/>
            <person name="Katoch K."/>
            <person name="Katoch V.M."/>
            <person name="Kumar P."/>
            <person name="Chaerkady R."/>
            <person name="Ramachandran S."/>
            <person name="Dash D."/>
            <person name="Pandey A."/>
        </authorList>
    </citation>
    <scope>IDENTIFICATION BY MASS SPECTROMETRY [LARGE SCALE ANALYSIS]</scope>
    <source>
        <strain>ATCC 25618 / H37Rv</strain>
    </source>
</reference>
<evidence type="ECO:0000250" key="1"/>
<evidence type="ECO:0000305" key="2"/>
<organism>
    <name type="scientific">Mycobacterium tuberculosis (strain ATCC 25618 / H37Rv)</name>
    <dbReference type="NCBI Taxonomy" id="83332"/>
    <lineage>
        <taxon>Bacteria</taxon>
        <taxon>Bacillati</taxon>
        <taxon>Actinomycetota</taxon>
        <taxon>Actinomycetes</taxon>
        <taxon>Mycobacteriales</taxon>
        <taxon>Mycobacteriaceae</taxon>
        <taxon>Mycobacterium</taxon>
        <taxon>Mycobacterium tuberculosis complex</taxon>
    </lineage>
</organism>
<name>RS19_MYCTU</name>
<feature type="chain" id="PRO_0000129856" description="Small ribosomal subunit protein uS19">
    <location>
        <begin position="1"/>
        <end position="93"/>
    </location>
</feature>